<name>RL32_BARQU</name>
<comment type="similarity">
    <text evidence="1">Belongs to the bacterial ribosomal protein bL32 family.</text>
</comment>
<dbReference type="EMBL" id="BX897700">
    <property type="protein sequence ID" value="CAF26675.1"/>
    <property type="molecule type" value="Genomic_DNA"/>
</dbReference>
<dbReference type="RefSeq" id="WP_004857790.1">
    <property type="nucleotide sequence ID" value="NC_005955.1"/>
</dbReference>
<dbReference type="SMR" id="Q6G107"/>
<dbReference type="GeneID" id="56533551"/>
<dbReference type="KEGG" id="bqu:BQ12160"/>
<dbReference type="eggNOG" id="COG0333">
    <property type="taxonomic scope" value="Bacteria"/>
</dbReference>
<dbReference type="HOGENOM" id="CLU_129084_2_2_5"/>
<dbReference type="OrthoDB" id="9801927at2"/>
<dbReference type="Proteomes" id="UP000000597">
    <property type="component" value="Chromosome"/>
</dbReference>
<dbReference type="GO" id="GO:0015934">
    <property type="term" value="C:large ribosomal subunit"/>
    <property type="evidence" value="ECO:0007669"/>
    <property type="project" value="InterPro"/>
</dbReference>
<dbReference type="GO" id="GO:0003735">
    <property type="term" value="F:structural constituent of ribosome"/>
    <property type="evidence" value="ECO:0007669"/>
    <property type="project" value="InterPro"/>
</dbReference>
<dbReference type="GO" id="GO:0006412">
    <property type="term" value="P:translation"/>
    <property type="evidence" value="ECO:0007669"/>
    <property type="project" value="UniProtKB-UniRule"/>
</dbReference>
<dbReference type="Gene3D" id="1.20.5.640">
    <property type="entry name" value="Single helix bin"/>
    <property type="match status" value="1"/>
</dbReference>
<dbReference type="HAMAP" id="MF_00340">
    <property type="entry name" value="Ribosomal_bL32"/>
    <property type="match status" value="1"/>
</dbReference>
<dbReference type="InterPro" id="IPR002677">
    <property type="entry name" value="Ribosomal_bL32"/>
</dbReference>
<dbReference type="InterPro" id="IPR044957">
    <property type="entry name" value="Ribosomal_bL32_bact"/>
</dbReference>
<dbReference type="InterPro" id="IPR011332">
    <property type="entry name" value="Ribosomal_zn-bd"/>
</dbReference>
<dbReference type="NCBIfam" id="TIGR01031">
    <property type="entry name" value="rpmF_bact"/>
    <property type="match status" value="1"/>
</dbReference>
<dbReference type="PANTHER" id="PTHR35534">
    <property type="entry name" value="50S RIBOSOMAL PROTEIN L32"/>
    <property type="match status" value="1"/>
</dbReference>
<dbReference type="PANTHER" id="PTHR35534:SF1">
    <property type="entry name" value="LARGE RIBOSOMAL SUBUNIT PROTEIN BL32"/>
    <property type="match status" value="1"/>
</dbReference>
<dbReference type="Pfam" id="PF01783">
    <property type="entry name" value="Ribosomal_L32p"/>
    <property type="match status" value="1"/>
</dbReference>
<dbReference type="SUPFAM" id="SSF57829">
    <property type="entry name" value="Zn-binding ribosomal proteins"/>
    <property type="match status" value="1"/>
</dbReference>
<sequence>MAVPKRKTSPSKRGMRRSADALKAPTYIEDKNSGELRRPHHIDLKTGMYRGRSVLPPKD</sequence>
<keyword id="KW-0687">Ribonucleoprotein</keyword>
<keyword id="KW-0689">Ribosomal protein</keyword>
<protein>
    <recommendedName>
        <fullName evidence="1">Large ribosomal subunit protein bL32</fullName>
    </recommendedName>
    <alternativeName>
        <fullName evidence="3">50S ribosomal protein L32</fullName>
    </alternativeName>
</protein>
<accession>Q6G107</accession>
<organism>
    <name type="scientific">Bartonella quintana (strain Toulouse)</name>
    <name type="common">Rochalimaea quintana</name>
    <dbReference type="NCBI Taxonomy" id="283165"/>
    <lineage>
        <taxon>Bacteria</taxon>
        <taxon>Pseudomonadati</taxon>
        <taxon>Pseudomonadota</taxon>
        <taxon>Alphaproteobacteria</taxon>
        <taxon>Hyphomicrobiales</taxon>
        <taxon>Bartonellaceae</taxon>
        <taxon>Bartonella</taxon>
    </lineage>
</organism>
<reference key="1">
    <citation type="journal article" date="2004" name="Proc. Natl. Acad. Sci. U.S.A.">
        <title>The louse-borne human pathogen Bartonella quintana is a genomic derivative of the zoonotic agent Bartonella henselae.</title>
        <authorList>
            <person name="Alsmark U.C.M."/>
            <person name="Frank A.C."/>
            <person name="Karlberg E.O."/>
            <person name="Legault B.-A."/>
            <person name="Ardell D.H."/>
            <person name="Canbaeck B."/>
            <person name="Eriksson A.-S."/>
            <person name="Naeslund A.K."/>
            <person name="Handley S.A."/>
            <person name="Huvet M."/>
            <person name="La Scola B."/>
            <person name="Holmberg M."/>
            <person name="Andersson S.G.E."/>
        </authorList>
    </citation>
    <scope>NUCLEOTIDE SEQUENCE [LARGE SCALE GENOMIC DNA]</scope>
    <source>
        <strain>Toulouse</strain>
    </source>
</reference>
<feature type="chain" id="PRO_0000172309" description="Large ribosomal subunit protein bL32">
    <location>
        <begin position="1"/>
        <end position="59"/>
    </location>
</feature>
<feature type="region of interest" description="Disordered" evidence="2">
    <location>
        <begin position="1"/>
        <end position="59"/>
    </location>
</feature>
<feature type="compositionally biased region" description="Basic residues" evidence="2">
    <location>
        <begin position="1"/>
        <end position="16"/>
    </location>
</feature>
<feature type="compositionally biased region" description="Basic and acidic residues" evidence="2">
    <location>
        <begin position="28"/>
        <end position="44"/>
    </location>
</feature>
<evidence type="ECO:0000255" key="1">
    <source>
        <dbReference type="HAMAP-Rule" id="MF_00340"/>
    </source>
</evidence>
<evidence type="ECO:0000256" key="2">
    <source>
        <dbReference type="SAM" id="MobiDB-lite"/>
    </source>
</evidence>
<evidence type="ECO:0000305" key="3"/>
<gene>
    <name evidence="1" type="primary">rpmF</name>
    <name type="ordered locus">BQ12160</name>
</gene>
<proteinExistence type="inferred from homology"/>